<proteinExistence type="inferred from homology"/>
<comment type="function">
    <text evidence="1">Catalyzes the N-acylation of UDP-3-O-acylglucosamine using 3-hydroxyacyl-ACP as the acyl donor. Is involved in the biosynthesis of lipid A, a phosphorylated glycolipid that anchors the lipopolysaccharide to the outer membrane of the cell.</text>
</comment>
<comment type="catalytic activity">
    <reaction evidence="1">
        <text>a UDP-3-O-[(3R)-3-hydroxyacyl]-alpha-D-glucosamine + a (3R)-hydroxyacyl-[ACP] = a UDP-2-N,3-O-bis[(3R)-3-hydroxyacyl]-alpha-D-glucosamine + holo-[ACP] + H(+)</text>
        <dbReference type="Rhea" id="RHEA:53836"/>
        <dbReference type="Rhea" id="RHEA-COMP:9685"/>
        <dbReference type="Rhea" id="RHEA-COMP:9945"/>
        <dbReference type="ChEBI" id="CHEBI:15378"/>
        <dbReference type="ChEBI" id="CHEBI:64479"/>
        <dbReference type="ChEBI" id="CHEBI:78827"/>
        <dbReference type="ChEBI" id="CHEBI:137740"/>
        <dbReference type="ChEBI" id="CHEBI:137748"/>
        <dbReference type="EC" id="2.3.1.191"/>
    </reaction>
</comment>
<comment type="pathway">
    <text evidence="1">Bacterial outer membrane biogenesis; LPS lipid A biosynthesis.</text>
</comment>
<comment type="subunit">
    <text evidence="1">Homotrimer.</text>
</comment>
<comment type="similarity">
    <text evidence="1">Belongs to the transferase hexapeptide repeat family. LpxD subfamily.</text>
</comment>
<accession>Q1IQB4</accession>
<reference key="1">
    <citation type="journal article" date="2009" name="Appl. Environ. Microbiol.">
        <title>Three genomes from the phylum Acidobacteria provide insight into the lifestyles of these microorganisms in soils.</title>
        <authorList>
            <person name="Ward N.L."/>
            <person name="Challacombe J.F."/>
            <person name="Janssen P.H."/>
            <person name="Henrissat B."/>
            <person name="Coutinho P.M."/>
            <person name="Wu M."/>
            <person name="Xie G."/>
            <person name="Haft D.H."/>
            <person name="Sait M."/>
            <person name="Badger J."/>
            <person name="Barabote R.D."/>
            <person name="Bradley B."/>
            <person name="Brettin T.S."/>
            <person name="Brinkac L.M."/>
            <person name="Bruce D."/>
            <person name="Creasy T."/>
            <person name="Daugherty S.C."/>
            <person name="Davidsen T.M."/>
            <person name="DeBoy R.T."/>
            <person name="Detter J.C."/>
            <person name="Dodson R.J."/>
            <person name="Durkin A.S."/>
            <person name="Ganapathy A."/>
            <person name="Gwinn-Giglio M."/>
            <person name="Han C.S."/>
            <person name="Khouri H."/>
            <person name="Kiss H."/>
            <person name="Kothari S.P."/>
            <person name="Madupu R."/>
            <person name="Nelson K.E."/>
            <person name="Nelson W.C."/>
            <person name="Paulsen I."/>
            <person name="Penn K."/>
            <person name="Ren Q."/>
            <person name="Rosovitz M.J."/>
            <person name="Selengut J.D."/>
            <person name="Shrivastava S."/>
            <person name="Sullivan S.A."/>
            <person name="Tapia R."/>
            <person name="Thompson L.S."/>
            <person name="Watkins K.L."/>
            <person name="Yang Q."/>
            <person name="Yu C."/>
            <person name="Zafar N."/>
            <person name="Zhou L."/>
            <person name="Kuske C.R."/>
        </authorList>
    </citation>
    <scope>NUCLEOTIDE SEQUENCE [LARGE SCALE GENOMIC DNA]</scope>
    <source>
        <strain>Ellin345</strain>
    </source>
</reference>
<organism>
    <name type="scientific">Koribacter versatilis (strain Ellin345)</name>
    <dbReference type="NCBI Taxonomy" id="204669"/>
    <lineage>
        <taxon>Bacteria</taxon>
        <taxon>Pseudomonadati</taxon>
        <taxon>Acidobacteriota</taxon>
        <taxon>Terriglobia</taxon>
        <taxon>Terriglobales</taxon>
        <taxon>Candidatus Korobacteraceae</taxon>
        <taxon>Candidatus Korobacter</taxon>
    </lineage>
</organism>
<name>LPXD1_KORVE</name>
<evidence type="ECO:0000255" key="1">
    <source>
        <dbReference type="HAMAP-Rule" id="MF_00523"/>
    </source>
</evidence>
<keyword id="KW-0012">Acyltransferase</keyword>
<keyword id="KW-0441">Lipid A biosynthesis</keyword>
<keyword id="KW-0444">Lipid biosynthesis</keyword>
<keyword id="KW-0443">Lipid metabolism</keyword>
<keyword id="KW-1185">Reference proteome</keyword>
<keyword id="KW-0677">Repeat</keyword>
<keyword id="KW-0808">Transferase</keyword>
<gene>
    <name evidence="1" type="primary">lpxD1</name>
    <name type="ordered locus">Acid345_1935</name>
</gene>
<feature type="chain" id="PRO_0000264340" description="UDP-3-O-acylglucosamine N-acyltransferase 1">
    <location>
        <begin position="1"/>
        <end position="337"/>
    </location>
</feature>
<feature type="active site" description="Proton acceptor" evidence="1">
    <location>
        <position position="238"/>
    </location>
</feature>
<dbReference type="EC" id="2.3.1.191" evidence="1"/>
<dbReference type="EMBL" id="CP000360">
    <property type="protein sequence ID" value="ABF40936.1"/>
    <property type="molecule type" value="Genomic_DNA"/>
</dbReference>
<dbReference type="RefSeq" id="WP_011522737.1">
    <property type="nucleotide sequence ID" value="NC_008009.1"/>
</dbReference>
<dbReference type="SMR" id="Q1IQB4"/>
<dbReference type="STRING" id="204669.Acid345_1935"/>
<dbReference type="EnsemblBacteria" id="ABF40936">
    <property type="protein sequence ID" value="ABF40936"/>
    <property type="gene ID" value="Acid345_1935"/>
</dbReference>
<dbReference type="KEGG" id="aba:Acid345_1935"/>
<dbReference type="eggNOG" id="COG1044">
    <property type="taxonomic scope" value="Bacteria"/>
</dbReference>
<dbReference type="HOGENOM" id="CLU_049865_0_0_0"/>
<dbReference type="OrthoDB" id="9784739at2"/>
<dbReference type="UniPathway" id="UPA00973"/>
<dbReference type="Proteomes" id="UP000002432">
    <property type="component" value="Chromosome"/>
</dbReference>
<dbReference type="GO" id="GO:0016020">
    <property type="term" value="C:membrane"/>
    <property type="evidence" value="ECO:0007669"/>
    <property type="project" value="GOC"/>
</dbReference>
<dbReference type="GO" id="GO:0016410">
    <property type="term" value="F:N-acyltransferase activity"/>
    <property type="evidence" value="ECO:0007669"/>
    <property type="project" value="InterPro"/>
</dbReference>
<dbReference type="GO" id="GO:0009245">
    <property type="term" value="P:lipid A biosynthetic process"/>
    <property type="evidence" value="ECO:0007669"/>
    <property type="project" value="UniProtKB-UniRule"/>
</dbReference>
<dbReference type="CDD" id="cd03352">
    <property type="entry name" value="LbH_LpxD"/>
    <property type="match status" value="1"/>
</dbReference>
<dbReference type="Gene3D" id="2.160.10.10">
    <property type="entry name" value="Hexapeptide repeat proteins"/>
    <property type="match status" value="1"/>
</dbReference>
<dbReference type="Gene3D" id="3.40.1390.10">
    <property type="entry name" value="MurE/MurF, N-terminal domain"/>
    <property type="match status" value="1"/>
</dbReference>
<dbReference type="HAMAP" id="MF_00523">
    <property type="entry name" value="LpxD"/>
    <property type="match status" value="1"/>
</dbReference>
<dbReference type="InterPro" id="IPR001451">
    <property type="entry name" value="Hexapep"/>
</dbReference>
<dbReference type="InterPro" id="IPR007691">
    <property type="entry name" value="LpxD"/>
</dbReference>
<dbReference type="InterPro" id="IPR011004">
    <property type="entry name" value="Trimer_LpxA-like_sf"/>
</dbReference>
<dbReference type="InterPro" id="IPR020573">
    <property type="entry name" value="UDP_GlcNAc_AcTrfase_non-rep"/>
</dbReference>
<dbReference type="NCBIfam" id="TIGR01853">
    <property type="entry name" value="lipid_A_lpxD"/>
    <property type="match status" value="1"/>
</dbReference>
<dbReference type="NCBIfam" id="NF002060">
    <property type="entry name" value="PRK00892.1"/>
    <property type="match status" value="1"/>
</dbReference>
<dbReference type="PANTHER" id="PTHR43378">
    <property type="entry name" value="UDP-3-O-ACYLGLUCOSAMINE N-ACYLTRANSFERASE"/>
    <property type="match status" value="1"/>
</dbReference>
<dbReference type="PANTHER" id="PTHR43378:SF2">
    <property type="entry name" value="UDP-3-O-ACYLGLUCOSAMINE N-ACYLTRANSFERASE 1, MITOCHONDRIAL-RELATED"/>
    <property type="match status" value="1"/>
</dbReference>
<dbReference type="Pfam" id="PF00132">
    <property type="entry name" value="Hexapep"/>
    <property type="match status" value="2"/>
</dbReference>
<dbReference type="Pfam" id="PF04613">
    <property type="entry name" value="LpxD"/>
    <property type="match status" value="1"/>
</dbReference>
<dbReference type="SUPFAM" id="SSF51161">
    <property type="entry name" value="Trimeric LpxA-like enzymes"/>
    <property type="match status" value="1"/>
</dbReference>
<dbReference type="PROSITE" id="PS00101">
    <property type="entry name" value="HEXAPEP_TRANSFERASES"/>
    <property type="match status" value="1"/>
</dbReference>
<sequence length="337" mass="35589">MKLSEIARRLGCTLDNCPDPDAVEITAVTGIEAAGPTDITFVSNPRYAAAAKTTHAGAIIVSDDFTAGRAPLVRSKNPYLTFAKAIELFYQAPKYAPGIHPTAVISPTAKVGANASIGPYVVIEDNVAIGANCVLRAHVVIYEGVTIGDNFFAHAHAVVREHCRIGNNVILQNGVVIGADGYGFARDTDGWYKIAQSGTTILDDNVEVQANSTVDRASIGETHIYADAKIDNLVMIGHGSSVGEHSLLCSQVGLAGSSHVGKNVILAGQVGVAGHLHIGDGVIAAGQTGVQNDIEPGKRIGGSPSYDHKQWIRSWQIQTRLPEIVKELRNLASKKSE</sequence>
<protein>
    <recommendedName>
        <fullName evidence="1">UDP-3-O-acylglucosamine N-acyltransferase 1</fullName>
        <ecNumber evidence="1">2.3.1.191</ecNumber>
    </recommendedName>
</protein>